<feature type="chain" id="PRO_1000055926" description="Large ribosomal subunit protein bL17">
    <location>
        <begin position="1"/>
        <end position="136"/>
    </location>
</feature>
<dbReference type="EMBL" id="CP000463">
    <property type="protein sequence ID" value="ABJ07491.1"/>
    <property type="molecule type" value="Genomic_DNA"/>
</dbReference>
<dbReference type="SMR" id="Q07KP3"/>
<dbReference type="STRING" id="316055.RPE_3561"/>
<dbReference type="KEGG" id="rpe:RPE_3561"/>
<dbReference type="eggNOG" id="COG0203">
    <property type="taxonomic scope" value="Bacteria"/>
</dbReference>
<dbReference type="HOGENOM" id="CLU_074407_2_0_5"/>
<dbReference type="OrthoDB" id="9809073at2"/>
<dbReference type="GO" id="GO:0022625">
    <property type="term" value="C:cytosolic large ribosomal subunit"/>
    <property type="evidence" value="ECO:0007669"/>
    <property type="project" value="TreeGrafter"/>
</dbReference>
<dbReference type="GO" id="GO:0003735">
    <property type="term" value="F:structural constituent of ribosome"/>
    <property type="evidence" value="ECO:0007669"/>
    <property type="project" value="InterPro"/>
</dbReference>
<dbReference type="GO" id="GO:0006412">
    <property type="term" value="P:translation"/>
    <property type="evidence" value="ECO:0007669"/>
    <property type="project" value="UniProtKB-UniRule"/>
</dbReference>
<dbReference type="FunFam" id="3.90.1030.10:FF:000001">
    <property type="entry name" value="50S ribosomal protein L17"/>
    <property type="match status" value="1"/>
</dbReference>
<dbReference type="Gene3D" id="3.90.1030.10">
    <property type="entry name" value="Ribosomal protein L17"/>
    <property type="match status" value="1"/>
</dbReference>
<dbReference type="HAMAP" id="MF_01368">
    <property type="entry name" value="Ribosomal_bL17"/>
    <property type="match status" value="1"/>
</dbReference>
<dbReference type="InterPro" id="IPR000456">
    <property type="entry name" value="Ribosomal_bL17"/>
</dbReference>
<dbReference type="InterPro" id="IPR047859">
    <property type="entry name" value="Ribosomal_bL17_CS"/>
</dbReference>
<dbReference type="InterPro" id="IPR036373">
    <property type="entry name" value="Ribosomal_bL17_sf"/>
</dbReference>
<dbReference type="NCBIfam" id="TIGR00059">
    <property type="entry name" value="L17"/>
    <property type="match status" value="1"/>
</dbReference>
<dbReference type="PANTHER" id="PTHR14413:SF16">
    <property type="entry name" value="LARGE RIBOSOMAL SUBUNIT PROTEIN BL17M"/>
    <property type="match status" value="1"/>
</dbReference>
<dbReference type="PANTHER" id="PTHR14413">
    <property type="entry name" value="RIBOSOMAL PROTEIN L17"/>
    <property type="match status" value="1"/>
</dbReference>
<dbReference type="Pfam" id="PF01196">
    <property type="entry name" value="Ribosomal_L17"/>
    <property type="match status" value="1"/>
</dbReference>
<dbReference type="SUPFAM" id="SSF64263">
    <property type="entry name" value="Prokaryotic ribosomal protein L17"/>
    <property type="match status" value="1"/>
</dbReference>
<dbReference type="PROSITE" id="PS01167">
    <property type="entry name" value="RIBOSOMAL_L17"/>
    <property type="match status" value="1"/>
</dbReference>
<protein>
    <recommendedName>
        <fullName evidence="1">Large ribosomal subunit protein bL17</fullName>
    </recommendedName>
    <alternativeName>
        <fullName evidence="2">50S ribosomal protein L17</fullName>
    </alternativeName>
</protein>
<accession>Q07KP3</accession>
<gene>
    <name evidence="1" type="primary">rplQ</name>
    <name type="ordered locus">RPE_3561</name>
</gene>
<sequence>MRHGKVHRKLNRTAEHRKAMFANMCASLIKHEQIITTLPKAKELRPIVEKLITLGKKNTLASRRQAISEMRDLDQVKKLFAVMAPRYADRHGGYTRIIKAGFRYGDNAPMAVIEFVDRDIEAKGKDSGPTQESEAA</sequence>
<proteinExistence type="inferred from homology"/>
<keyword id="KW-0687">Ribonucleoprotein</keyword>
<keyword id="KW-0689">Ribosomal protein</keyword>
<name>RL17_RHOP5</name>
<reference key="1">
    <citation type="submission" date="2006-09" db="EMBL/GenBank/DDBJ databases">
        <title>Complete sequence of Rhodopseudomonas palustris BisA53.</title>
        <authorList>
            <consortium name="US DOE Joint Genome Institute"/>
            <person name="Copeland A."/>
            <person name="Lucas S."/>
            <person name="Lapidus A."/>
            <person name="Barry K."/>
            <person name="Detter J.C."/>
            <person name="Glavina del Rio T."/>
            <person name="Hammon N."/>
            <person name="Israni S."/>
            <person name="Dalin E."/>
            <person name="Tice H."/>
            <person name="Pitluck S."/>
            <person name="Chain P."/>
            <person name="Malfatti S."/>
            <person name="Shin M."/>
            <person name="Vergez L."/>
            <person name="Schmutz J."/>
            <person name="Larimer F."/>
            <person name="Land M."/>
            <person name="Hauser L."/>
            <person name="Pelletier D.A."/>
            <person name="Kyrpides N."/>
            <person name="Kim E."/>
            <person name="Harwood C.S."/>
            <person name="Oda Y."/>
            <person name="Richardson P."/>
        </authorList>
    </citation>
    <scope>NUCLEOTIDE SEQUENCE [LARGE SCALE GENOMIC DNA]</scope>
    <source>
        <strain>BisA53</strain>
    </source>
</reference>
<evidence type="ECO:0000255" key="1">
    <source>
        <dbReference type="HAMAP-Rule" id="MF_01368"/>
    </source>
</evidence>
<evidence type="ECO:0000305" key="2"/>
<comment type="subunit">
    <text evidence="1">Part of the 50S ribosomal subunit. Contacts protein L32.</text>
</comment>
<comment type="similarity">
    <text evidence="1">Belongs to the bacterial ribosomal protein bL17 family.</text>
</comment>
<organism>
    <name type="scientific">Rhodopseudomonas palustris (strain BisA53)</name>
    <dbReference type="NCBI Taxonomy" id="316055"/>
    <lineage>
        <taxon>Bacteria</taxon>
        <taxon>Pseudomonadati</taxon>
        <taxon>Pseudomonadota</taxon>
        <taxon>Alphaproteobacteria</taxon>
        <taxon>Hyphomicrobiales</taxon>
        <taxon>Nitrobacteraceae</taxon>
        <taxon>Rhodopseudomonas</taxon>
    </lineage>
</organism>